<comment type="function">
    <text evidence="1">Transfers the gamma-phosphate of ATP to the 4'-position of a tetraacyldisaccharide 1-phosphate intermediate (termed DS-1-P) to form tetraacyldisaccharide 1,4'-bis-phosphate (lipid IVA).</text>
</comment>
<comment type="catalytic activity">
    <reaction evidence="1">
        <text>a lipid A disaccharide + ATP = a lipid IVA + ADP + H(+)</text>
        <dbReference type="Rhea" id="RHEA:67840"/>
        <dbReference type="ChEBI" id="CHEBI:15378"/>
        <dbReference type="ChEBI" id="CHEBI:30616"/>
        <dbReference type="ChEBI" id="CHEBI:176343"/>
        <dbReference type="ChEBI" id="CHEBI:176425"/>
        <dbReference type="ChEBI" id="CHEBI:456216"/>
        <dbReference type="EC" id="2.7.1.130"/>
    </reaction>
</comment>
<comment type="pathway">
    <text evidence="1">Glycolipid biosynthesis; lipid IV(A) biosynthesis; lipid IV(A) from (3R)-3-hydroxytetradecanoyl-[acyl-carrier-protein] and UDP-N-acetyl-alpha-D-glucosamine: step 6/6.</text>
</comment>
<comment type="similarity">
    <text evidence="1">Belongs to the LpxK family.</text>
</comment>
<keyword id="KW-0067">ATP-binding</keyword>
<keyword id="KW-0418">Kinase</keyword>
<keyword id="KW-0441">Lipid A biosynthesis</keyword>
<keyword id="KW-0444">Lipid biosynthesis</keyword>
<keyword id="KW-0443">Lipid metabolism</keyword>
<keyword id="KW-0547">Nucleotide-binding</keyword>
<keyword id="KW-1185">Reference proteome</keyword>
<keyword id="KW-0808">Transferase</keyword>
<accession>A1BDV6</accession>
<sequence>MSFDLPDIILRPASLLYKNIIRIRNRLYDQQIFHTWHSPLPIVSIGNISAGGTGKTPLVDWIVKYYLSLGCKPAIVSRGYGRNTKGVQLVSDGKTVLMKSNACGDETAMLAWNNRDAIVIVAEKRKDAVTFIIRRFAEAMPDVIILDDAFQHRQIARNLDIVVINEKEPYFRADMIPKGRLREPLINLARADLLVLSKITGGSTTAAISMDLEQTGKPVIKAGIAAGNLVCLSGMFNTAKESPVHAGIKALAFAGIGSPQSFIDTLEGQGIQIVSHRFFRDHESYTAKKIAALRLEADEKKLTLVTTEKDYFRMLGQPELQEILHTLSCCYLKIRPEFTEGEKLLKTMLNAVINR</sequence>
<feature type="chain" id="PRO_1000080464" description="Tetraacyldisaccharide 4'-kinase">
    <location>
        <begin position="1"/>
        <end position="355"/>
    </location>
</feature>
<feature type="binding site" evidence="1">
    <location>
        <begin position="49"/>
        <end position="56"/>
    </location>
    <ligand>
        <name>ATP</name>
        <dbReference type="ChEBI" id="CHEBI:30616"/>
    </ligand>
</feature>
<reference key="1">
    <citation type="submission" date="2006-12" db="EMBL/GenBank/DDBJ databases">
        <title>Complete sequence of Chlorobium phaeobacteroides DSM 266.</title>
        <authorList>
            <consortium name="US DOE Joint Genome Institute"/>
            <person name="Copeland A."/>
            <person name="Lucas S."/>
            <person name="Lapidus A."/>
            <person name="Barry K."/>
            <person name="Detter J.C."/>
            <person name="Glavina del Rio T."/>
            <person name="Hammon N."/>
            <person name="Israni S."/>
            <person name="Pitluck S."/>
            <person name="Goltsman E."/>
            <person name="Schmutz J."/>
            <person name="Larimer F."/>
            <person name="Land M."/>
            <person name="Hauser L."/>
            <person name="Mikhailova N."/>
            <person name="Li T."/>
            <person name="Overmann J."/>
            <person name="Bryant D.A."/>
            <person name="Richardson P."/>
        </authorList>
    </citation>
    <scope>NUCLEOTIDE SEQUENCE [LARGE SCALE GENOMIC DNA]</scope>
    <source>
        <strain>DSM 266 / SMG 266 / 2430</strain>
    </source>
</reference>
<name>LPXK_CHLPD</name>
<proteinExistence type="inferred from homology"/>
<organism>
    <name type="scientific">Chlorobium phaeobacteroides (strain DSM 266 / SMG 266 / 2430)</name>
    <dbReference type="NCBI Taxonomy" id="290317"/>
    <lineage>
        <taxon>Bacteria</taxon>
        <taxon>Pseudomonadati</taxon>
        <taxon>Chlorobiota</taxon>
        <taxon>Chlorobiia</taxon>
        <taxon>Chlorobiales</taxon>
        <taxon>Chlorobiaceae</taxon>
        <taxon>Chlorobium/Pelodictyon group</taxon>
        <taxon>Chlorobium</taxon>
    </lineage>
</organism>
<gene>
    <name evidence="1" type="primary">lpxK</name>
    <name type="ordered locus">Cpha266_0526</name>
</gene>
<evidence type="ECO:0000255" key="1">
    <source>
        <dbReference type="HAMAP-Rule" id="MF_00409"/>
    </source>
</evidence>
<protein>
    <recommendedName>
        <fullName evidence="1">Tetraacyldisaccharide 4'-kinase</fullName>
        <ecNumber evidence="1">2.7.1.130</ecNumber>
    </recommendedName>
    <alternativeName>
        <fullName evidence="1">Lipid A 4'-kinase</fullName>
    </alternativeName>
</protein>
<dbReference type="EC" id="2.7.1.130" evidence="1"/>
<dbReference type="EMBL" id="CP000492">
    <property type="protein sequence ID" value="ABL64583.1"/>
    <property type="molecule type" value="Genomic_DNA"/>
</dbReference>
<dbReference type="RefSeq" id="WP_011744416.1">
    <property type="nucleotide sequence ID" value="NC_008639.1"/>
</dbReference>
<dbReference type="SMR" id="A1BDV6"/>
<dbReference type="STRING" id="290317.Cpha266_0526"/>
<dbReference type="KEGG" id="cph:Cpha266_0526"/>
<dbReference type="eggNOG" id="COG1663">
    <property type="taxonomic scope" value="Bacteria"/>
</dbReference>
<dbReference type="HOGENOM" id="CLU_038816_6_0_10"/>
<dbReference type="OrthoDB" id="9766423at2"/>
<dbReference type="UniPathway" id="UPA00359">
    <property type="reaction ID" value="UER00482"/>
</dbReference>
<dbReference type="Proteomes" id="UP000008701">
    <property type="component" value="Chromosome"/>
</dbReference>
<dbReference type="GO" id="GO:0005886">
    <property type="term" value="C:plasma membrane"/>
    <property type="evidence" value="ECO:0007669"/>
    <property type="project" value="TreeGrafter"/>
</dbReference>
<dbReference type="GO" id="GO:0005524">
    <property type="term" value="F:ATP binding"/>
    <property type="evidence" value="ECO:0007669"/>
    <property type="project" value="UniProtKB-UniRule"/>
</dbReference>
<dbReference type="GO" id="GO:0009029">
    <property type="term" value="F:tetraacyldisaccharide 4'-kinase activity"/>
    <property type="evidence" value="ECO:0007669"/>
    <property type="project" value="UniProtKB-UniRule"/>
</dbReference>
<dbReference type="GO" id="GO:0009245">
    <property type="term" value="P:lipid A biosynthetic process"/>
    <property type="evidence" value="ECO:0007669"/>
    <property type="project" value="UniProtKB-UniRule"/>
</dbReference>
<dbReference type="GO" id="GO:0009244">
    <property type="term" value="P:lipopolysaccharide core region biosynthetic process"/>
    <property type="evidence" value="ECO:0007669"/>
    <property type="project" value="TreeGrafter"/>
</dbReference>
<dbReference type="HAMAP" id="MF_00409">
    <property type="entry name" value="LpxK"/>
    <property type="match status" value="1"/>
</dbReference>
<dbReference type="InterPro" id="IPR003758">
    <property type="entry name" value="LpxK"/>
</dbReference>
<dbReference type="InterPro" id="IPR027417">
    <property type="entry name" value="P-loop_NTPase"/>
</dbReference>
<dbReference type="NCBIfam" id="TIGR00682">
    <property type="entry name" value="lpxK"/>
    <property type="match status" value="1"/>
</dbReference>
<dbReference type="PANTHER" id="PTHR42724">
    <property type="entry name" value="TETRAACYLDISACCHARIDE 4'-KINASE"/>
    <property type="match status" value="1"/>
</dbReference>
<dbReference type="PANTHER" id="PTHR42724:SF1">
    <property type="entry name" value="TETRAACYLDISACCHARIDE 4'-KINASE, MITOCHONDRIAL-RELATED"/>
    <property type="match status" value="1"/>
</dbReference>
<dbReference type="Pfam" id="PF02606">
    <property type="entry name" value="LpxK"/>
    <property type="match status" value="1"/>
</dbReference>
<dbReference type="SUPFAM" id="SSF52540">
    <property type="entry name" value="P-loop containing nucleoside triphosphate hydrolases"/>
    <property type="match status" value="1"/>
</dbReference>